<name>PFD2_SCHPO</name>
<keyword id="KW-0143">Chaperone</keyword>
<keyword id="KW-1185">Reference proteome</keyword>
<sequence length="114" mass="13296">MAEQPSRQQILQTQYNSYKSRLQQIAQKIVDLETDADEHKLVMDTLNSMDNNRRCFRMIHGVLVERTVGTVVPILKTTQEGIQTAMNGLLDQYKQLEAEFQKFQKDNKIQVVRQ</sequence>
<organism>
    <name type="scientific">Schizosaccharomyces pombe (strain 972 / ATCC 24843)</name>
    <name type="common">Fission yeast</name>
    <dbReference type="NCBI Taxonomy" id="284812"/>
    <lineage>
        <taxon>Eukaryota</taxon>
        <taxon>Fungi</taxon>
        <taxon>Dikarya</taxon>
        <taxon>Ascomycota</taxon>
        <taxon>Taphrinomycotina</taxon>
        <taxon>Schizosaccharomycetes</taxon>
        <taxon>Schizosaccharomycetales</taxon>
        <taxon>Schizosaccharomycetaceae</taxon>
        <taxon>Schizosaccharomyces</taxon>
    </lineage>
</organism>
<proteinExistence type="inferred from homology"/>
<feature type="chain" id="PRO_0000124840" description="Probable prefoldin subunit 2">
    <location>
        <begin position="1"/>
        <end position="114"/>
    </location>
</feature>
<accession>Q9UTC9</accession>
<gene>
    <name type="ORF">SPAC227.10</name>
</gene>
<evidence type="ECO:0000250" key="1"/>
<evidence type="ECO:0000305" key="2"/>
<comment type="function">
    <text evidence="1">Binds specifically to cytosolic chaperonin (c-CPN) and transfers target proteins to it. Binds to nascent polypeptide chain and promotes folding in an environment in which there are many competing pathways for nonnative proteins (By similarity).</text>
</comment>
<comment type="subunit">
    <text evidence="1">Heterohexamer of two PFD-alpha type and four PFD-beta type subunits.</text>
</comment>
<comment type="similarity">
    <text evidence="2">Belongs to the prefoldin subunit beta family.</text>
</comment>
<reference key="1">
    <citation type="journal article" date="2002" name="Nature">
        <title>The genome sequence of Schizosaccharomyces pombe.</title>
        <authorList>
            <person name="Wood V."/>
            <person name="Gwilliam R."/>
            <person name="Rajandream M.A."/>
            <person name="Lyne M.H."/>
            <person name="Lyne R."/>
            <person name="Stewart A."/>
            <person name="Sgouros J.G."/>
            <person name="Peat N."/>
            <person name="Hayles J."/>
            <person name="Baker S.G."/>
            <person name="Basham D."/>
            <person name="Bowman S."/>
            <person name="Brooks K."/>
            <person name="Brown D."/>
            <person name="Brown S."/>
            <person name="Chillingworth T."/>
            <person name="Churcher C.M."/>
            <person name="Collins M."/>
            <person name="Connor R."/>
            <person name="Cronin A."/>
            <person name="Davis P."/>
            <person name="Feltwell T."/>
            <person name="Fraser A."/>
            <person name="Gentles S."/>
            <person name="Goble A."/>
            <person name="Hamlin N."/>
            <person name="Harris D.E."/>
            <person name="Hidalgo J."/>
            <person name="Hodgson G."/>
            <person name="Holroyd S."/>
            <person name="Hornsby T."/>
            <person name="Howarth S."/>
            <person name="Huckle E.J."/>
            <person name="Hunt S."/>
            <person name="Jagels K."/>
            <person name="James K.D."/>
            <person name="Jones L."/>
            <person name="Jones M."/>
            <person name="Leather S."/>
            <person name="McDonald S."/>
            <person name="McLean J."/>
            <person name="Mooney P."/>
            <person name="Moule S."/>
            <person name="Mungall K.L."/>
            <person name="Murphy L.D."/>
            <person name="Niblett D."/>
            <person name="Odell C."/>
            <person name="Oliver K."/>
            <person name="O'Neil S."/>
            <person name="Pearson D."/>
            <person name="Quail M.A."/>
            <person name="Rabbinowitsch E."/>
            <person name="Rutherford K.M."/>
            <person name="Rutter S."/>
            <person name="Saunders D."/>
            <person name="Seeger K."/>
            <person name="Sharp S."/>
            <person name="Skelton J."/>
            <person name="Simmonds M.N."/>
            <person name="Squares R."/>
            <person name="Squares S."/>
            <person name="Stevens K."/>
            <person name="Taylor K."/>
            <person name="Taylor R.G."/>
            <person name="Tivey A."/>
            <person name="Walsh S.V."/>
            <person name="Warren T."/>
            <person name="Whitehead S."/>
            <person name="Woodward J.R."/>
            <person name="Volckaert G."/>
            <person name="Aert R."/>
            <person name="Robben J."/>
            <person name="Grymonprez B."/>
            <person name="Weltjens I."/>
            <person name="Vanstreels E."/>
            <person name="Rieger M."/>
            <person name="Schaefer M."/>
            <person name="Mueller-Auer S."/>
            <person name="Gabel C."/>
            <person name="Fuchs M."/>
            <person name="Duesterhoeft A."/>
            <person name="Fritzc C."/>
            <person name="Holzer E."/>
            <person name="Moestl D."/>
            <person name="Hilbert H."/>
            <person name="Borzym K."/>
            <person name="Langer I."/>
            <person name="Beck A."/>
            <person name="Lehrach H."/>
            <person name="Reinhardt R."/>
            <person name="Pohl T.M."/>
            <person name="Eger P."/>
            <person name="Zimmermann W."/>
            <person name="Wedler H."/>
            <person name="Wambutt R."/>
            <person name="Purnelle B."/>
            <person name="Goffeau A."/>
            <person name="Cadieu E."/>
            <person name="Dreano S."/>
            <person name="Gloux S."/>
            <person name="Lelaure V."/>
            <person name="Mottier S."/>
            <person name="Galibert F."/>
            <person name="Aves S.J."/>
            <person name="Xiang Z."/>
            <person name="Hunt C."/>
            <person name="Moore K."/>
            <person name="Hurst S.M."/>
            <person name="Lucas M."/>
            <person name="Rochet M."/>
            <person name="Gaillardin C."/>
            <person name="Tallada V.A."/>
            <person name="Garzon A."/>
            <person name="Thode G."/>
            <person name="Daga R.R."/>
            <person name="Cruzado L."/>
            <person name="Jimenez J."/>
            <person name="Sanchez M."/>
            <person name="del Rey F."/>
            <person name="Benito J."/>
            <person name="Dominguez A."/>
            <person name="Revuelta J.L."/>
            <person name="Moreno S."/>
            <person name="Armstrong J."/>
            <person name="Forsburg S.L."/>
            <person name="Cerutti L."/>
            <person name="Lowe T."/>
            <person name="McCombie W.R."/>
            <person name="Paulsen I."/>
            <person name="Potashkin J."/>
            <person name="Shpakovski G.V."/>
            <person name="Ussery D."/>
            <person name="Barrell B.G."/>
            <person name="Nurse P."/>
        </authorList>
    </citation>
    <scope>NUCLEOTIDE SEQUENCE [LARGE SCALE GENOMIC DNA]</scope>
    <source>
        <strain>972 / ATCC 24843</strain>
    </source>
</reference>
<dbReference type="EMBL" id="CU329670">
    <property type="protein sequence ID" value="CAB61459.1"/>
    <property type="molecule type" value="Genomic_DNA"/>
</dbReference>
<dbReference type="PIR" id="T50166">
    <property type="entry name" value="T50166"/>
</dbReference>
<dbReference type="SMR" id="Q9UTC9"/>
<dbReference type="BioGRID" id="278000">
    <property type="interactions" value="34"/>
</dbReference>
<dbReference type="FunCoup" id="Q9UTC9">
    <property type="interactions" value="656"/>
</dbReference>
<dbReference type="IntAct" id="Q9UTC9">
    <property type="interactions" value="1"/>
</dbReference>
<dbReference type="MINT" id="Q9UTC9"/>
<dbReference type="STRING" id="284812.Q9UTC9"/>
<dbReference type="iPTMnet" id="Q9UTC9"/>
<dbReference type="PaxDb" id="4896-SPAC227.10.1"/>
<dbReference type="EnsemblFungi" id="SPAC227.10.1">
    <property type="protein sequence ID" value="SPAC227.10.1:pep"/>
    <property type="gene ID" value="SPAC227.10"/>
</dbReference>
<dbReference type="KEGG" id="spo:2541498"/>
<dbReference type="PomBase" id="SPAC227.10"/>
<dbReference type="VEuPathDB" id="FungiDB:SPAC227.10"/>
<dbReference type="eggNOG" id="KOG4098">
    <property type="taxonomic scope" value="Eukaryota"/>
</dbReference>
<dbReference type="HOGENOM" id="CLU_113004_1_0_1"/>
<dbReference type="InParanoid" id="Q9UTC9"/>
<dbReference type="OMA" id="CFKMIGG"/>
<dbReference type="PhylomeDB" id="Q9UTC9"/>
<dbReference type="PRO" id="PR:Q9UTC9"/>
<dbReference type="Proteomes" id="UP000002485">
    <property type="component" value="Chromosome I"/>
</dbReference>
<dbReference type="GO" id="GO:0005737">
    <property type="term" value="C:cytoplasm"/>
    <property type="evidence" value="ECO:0000318"/>
    <property type="project" value="GO_Central"/>
</dbReference>
<dbReference type="GO" id="GO:0016272">
    <property type="term" value="C:prefoldin complex"/>
    <property type="evidence" value="ECO:0000266"/>
    <property type="project" value="PomBase"/>
</dbReference>
<dbReference type="GO" id="GO:0044183">
    <property type="term" value="F:protein folding chaperone"/>
    <property type="evidence" value="ECO:0000318"/>
    <property type="project" value="GO_Central"/>
</dbReference>
<dbReference type="GO" id="GO:0051082">
    <property type="term" value="F:unfolded protein binding"/>
    <property type="evidence" value="ECO:0007669"/>
    <property type="project" value="InterPro"/>
</dbReference>
<dbReference type="GO" id="GO:0006457">
    <property type="term" value="P:protein folding"/>
    <property type="evidence" value="ECO:0000318"/>
    <property type="project" value="GO_Central"/>
</dbReference>
<dbReference type="CDD" id="cd23163">
    <property type="entry name" value="Prefoldin_2"/>
    <property type="match status" value="1"/>
</dbReference>
<dbReference type="FunFam" id="1.10.287.370:FF:000002">
    <property type="entry name" value="Prefoldin subunit 2"/>
    <property type="match status" value="1"/>
</dbReference>
<dbReference type="Gene3D" id="1.10.287.370">
    <property type="match status" value="1"/>
</dbReference>
<dbReference type="InterPro" id="IPR027235">
    <property type="entry name" value="PFD2"/>
</dbReference>
<dbReference type="InterPro" id="IPR002777">
    <property type="entry name" value="PFD_beta-like"/>
</dbReference>
<dbReference type="InterPro" id="IPR009053">
    <property type="entry name" value="Prefoldin"/>
</dbReference>
<dbReference type="PANTHER" id="PTHR13303">
    <property type="entry name" value="PREFOLDIN SUBUNIT 2"/>
    <property type="match status" value="1"/>
</dbReference>
<dbReference type="Pfam" id="PF01920">
    <property type="entry name" value="Prefoldin_2"/>
    <property type="match status" value="1"/>
</dbReference>
<dbReference type="SUPFAM" id="SSF46579">
    <property type="entry name" value="Prefoldin"/>
    <property type="match status" value="1"/>
</dbReference>
<protein>
    <recommendedName>
        <fullName>Probable prefoldin subunit 2</fullName>
    </recommendedName>
</protein>